<name>Y5010_ARATH</name>
<sequence length="214" mass="24430">MATRGAVAAAASTIWKHRRNPSLRSLSRHFNPNFNHRIIPTGFKYQVRAIQGTSTDPVITPLKNREEPKPQNWKIKMLYDGDCPLCMREVNMLMERNEKHGTIKFVDISSNDYSPEDNQGLDYKTVMGQIHAIQSDGNVVKGVEAFRRLYEEVGLGWVYTITKFEPIGKLADVVYDVWAKYRLQVTGRPSIEAILEARKKDKVETCGESKNCKI</sequence>
<proteinExistence type="evidence at protein level"/>
<accession>Q8W485</accession>
<accession>Q9FGA1</accession>
<organism>
    <name type="scientific">Arabidopsis thaliana</name>
    <name type="common">Mouse-ear cress</name>
    <dbReference type="NCBI Taxonomy" id="3702"/>
    <lineage>
        <taxon>Eukaryota</taxon>
        <taxon>Viridiplantae</taxon>
        <taxon>Streptophyta</taxon>
        <taxon>Embryophyta</taxon>
        <taxon>Tracheophyta</taxon>
        <taxon>Spermatophyta</taxon>
        <taxon>Magnoliopsida</taxon>
        <taxon>eudicotyledons</taxon>
        <taxon>Gunneridae</taxon>
        <taxon>Pentapetalae</taxon>
        <taxon>rosids</taxon>
        <taxon>malvids</taxon>
        <taxon>Brassicales</taxon>
        <taxon>Brassicaceae</taxon>
        <taxon>Camelineae</taxon>
        <taxon>Arabidopsis</taxon>
    </lineage>
</organism>
<feature type="transit peptide" description="Chloroplast" evidence="1 2">
    <location>
        <begin position="1"/>
        <end position="49"/>
    </location>
</feature>
<feature type="chain" id="PRO_0000343174" description="Uncharacterized protein At5g50100, chloroplastic">
    <location>
        <begin position="50"/>
        <end position="214"/>
    </location>
</feature>
<dbReference type="EMBL" id="AB026650">
    <property type="protein sequence ID" value="BAB10296.1"/>
    <property type="status" value="ALT_SEQ"/>
    <property type="molecule type" value="Genomic_DNA"/>
</dbReference>
<dbReference type="EMBL" id="CP002688">
    <property type="protein sequence ID" value="AED95896.1"/>
    <property type="molecule type" value="Genomic_DNA"/>
</dbReference>
<dbReference type="EMBL" id="AY081637">
    <property type="protein sequence ID" value="AAM10199.1"/>
    <property type="molecule type" value="mRNA"/>
</dbReference>
<dbReference type="EMBL" id="AY062766">
    <property type="protein sequence ID" value="AAL32844.1"/>
    <property type="molecule type" value="mRNA"/>
</dbReference>
<dbReference type="EMBL" id="AY087459">
    <property type="protein sequence ID" value="AAM65004.1"/>
    <property type="molecule type" value="mRNA"/>
</dbReference>
<dbReference type="RefSeq" id="NP_568719.1">
    <property type="nucleotide sequence ID" value="NM_124389.2"/>
</dbReference>
<dbReference type="BioGRID" id="20320">
    <property type="interactions" value="4"/>
</dbReference>
<dbReference type="FunCoup" id="Q8W485">
    <property type="interactions" value="46"/>
</dbReference>
<dbReference type="IntAct" id="Q8W485">
    <property type="interactions" value="2"/>
</dbReference>
<dbReference type="PaxDb" id="3702-AT5G50100.1"/>
<dbReference type="ProteomicsDB" id="243041"/>
<dbReference type="DNASU" id="835074"/>
<dbReference type="EnsemblPlants" id="AT5G50100.1">
    <property type="protein sequence ID" value="AT5G50100.1"/>
    <property type="gene ID" value="AT5G50100"/>
</dbReference>
<dbReference type="GeneID" id="835074"/>
<dbReference type="Gramene" id="AT5G50100.1">
    <property type="protein sequence ID" value="AT5G50100.1"/>
    <property type="gene ID" value="AT5G50100"/>
</dbReference>
<dbReference type="KEGG" id="ath:AT5G50100"/>
<dbReference type="Araport" id="AT5G50100"/>
<dbReference type="TAIR" id="AT5G50100">
    <property type="gene designation" value="DCC1"/>
</dbReference>
<dbReference type="eggNOG" id="ENOG502RXZ4">
    <property type="taxonomic scope" value="Eukaryota"/>
</dbReference>
<dbReference type="HOGENOM" id="CLU_086500_1_0_1"/>
<dbReference type="InParanoid" id="Q8W485"/>
<dbReference type="OMA" id="NKGEVCK"/>
<dbReference type="PhylomeDB" id="Q8W485"/>
<dbReference type="PRO" id="PR:Q8W485"/>
<dbReference type="Proteomes" id="UP000006548">
    <property type="component" value="Chromosome 5"/>
</dbReference>
<dbReference type="ExpressionAtlas" id="Q8W485">
    <property type="expression patterns" value="baseline and differential"/>
</dbReference>
<dbReference type="GO" id="GO:0009507">
    <property type="term" value="C:chloroplast"/>
    <property type="evidence" value="ECO:0007669"/>
    <property type="project" value="UniProtKB-SubCell"/>
</dbReference>
<dbReference type="GO" id="GO:0005739">
    <property type="term" value="C:mitochondrion"/>
    <property type="evidence" value="ECO:0000314"/>
    <property type="project" value="TAIR"/>
</dbReference>
<dbReference type="GO" id="GO:0015035">
    <property type="term" value="F:protein-disulfide reductase activity"/>
    <property type="evidence" value="ECO:0000314"/>
    <property type="project" value="TAIR"/>
</dbReference>
<dbReference type="GO" id="GO:0042246">
    <property type="term" value="P:tissue regeneration"/>
    <property type="evidence" value="ECO:0000315"/>
    <property type="project" value="TAIR"/>
</dbReference>
<dbReference type="InterPro" id="IPR007263">
    <property type="entry name" value="DCC1-like"/>
</dbReference>
<dbReference type="InterPro" id="IPR044691">
    <property type="entry name" value="DCC1_Trx"/>
</dbReference>
<dbReference type="InterPro" id="IPR036249">
    <property type="entry name" value="Thioredoxin-like_sf"/>
</dbReference>
<dbReference type="PANTHER" id="PTHR34290:SF2">
    <property type="entry name" value="OS04G0668800 PROTEIN"/>
    <property type="match status" value="1"/>
</dbReference>
<dbReference type="PANTHER" id="PTHR34290">
    <property type="entry name" value="SI:CH73-390P7.2"/>
    <property type="match status" value="1"/>
</dbReference>
<dbReference type="Pfam" id="PF04134">
    <property type="entry name" value="DCC1-like"/>
    <property type="match status" value="1"/>
</dbReference>
<dbReference type="SUPFAM" id="SSF52833">
    <property type="entry name" value="Thioredoxin-like"/>
    <property type="match status" value="1"/>
</dbReference>
<reference key="1">
    <citation type="submission" date="1999-04" db="EMBL/GenBank/DDBJ databases">
        <title>Structural analysis of Arabidopsis thaliana chromosome 5. XI.</title>
        <authorList>
            <person name="Kaneko T."/>
            <person name="Katoh T."/>
            <person name="Asamizu E."/>
            <person name="Sato S."/>
            <person name="Nakamura Y."/>
            <person name="Kotani H."/>
            <person name="Tabata S."/>
        </authorList>
    </citation>
    <scope>NUCLEOTIDE SEQUENCE [LARGE SCALE GENOMIC DNA]</scope>
    <source>
        <strain>cv. Columbia</strain>
    </source>
</reference>
<reference key="2">
    <citation type="journal article" date="2017" name="Plant J.">
        <title>Araport11: a complete reannotation of the Arabidopsis thaliana reference genome.</title>
        <authorList>
            <person name="Cheng C.Y."/>
            <person name="Krishnakumar V."/>
            <person name="Chan A.P."/>
            <person name="Thibaud-Nissen F."/>
            <person name="Schobel S."/>
            <person name="Town C.D."/>
        </authorList>
    </citation>
    <scope>GENOME REANNOTATION</scope>
    <source>
        <strain>cv. Columbia</strain>
    </source>
</reference>
<reference key="3">
    <citation type="journal article" date="2003" name="Science">
        <title>Empirical analysis of transcriptional activity in the Arabidopsis genome.</title>
        <authorList>
            <person name="Yamada K."/>
            <person name="Lim J."/>
            <person name="Dale J.M."/>
            <person name="Chen H."/>
            <person name="Shinn P."/>
            <person name="Palm C.J."/>
            <person name="Southwick A.M."/>
            <person name="Wu H.C."/>
            <person name="Kim C.J."/>
            <person name="Nguyen M."/>
            <person name="Pham P.K."/>
            <person name="Cheuk R.F."/>
            <person name="Karlin-Newmann G."/>
            <person name="Liu S.X."/>
            <person name="Lam B."/>
            <person name="Sakano H."/>
            <person name="Wu T."/>
            <person name="Yu G."/>
            <person name="Miranda M."/>
            <person name="Quach H.L."/>
            <person name="Tripp M."/>
            <person name="Chang C.H."/>
            <person name="Lee J.M."/>
            <person name="Toriumi M.J."/>
            <person name="Chan M.M."/>
            <person name="Tang C.C."/>
            <person name="Onodera C.S."/>
            <person name="Deng J.M."/>
            <person name="Akiyama K."/>
            <person name="Ansari Y."/>
            <person name="Arakawa T."/>
            <person name="Banh J."/>
            <person name="Banno F."/>
            <person name="Bowser L."/>
            <person name="Brooks S.Y."/>
            <person name="Carninci P."/>
            <person name="Chao Q."/>
            <person name="Choy N."/>
            <person name="Enju A."/>
            <person name="Goldsmith A.D."/>
            <person name="Gurjal M."/>
            <person name="Hansen N.F."/>
            <person name="Hayashizaki Y."/>
            <person name="Johnson-Hopson C."/>
            <person name="Hsuan V.W."/>
            <person name="Iida K."/>
            <person name="Karnes M."/>
            <person name="Khan S."/>
            <person name="Koesema E."/>
            <person name="Ishida J."/>
            <person name="Jiang P.X."/>
            <person name="Jones T."/>
            <person name="Kawai J."/>
            <person name="Kamiya A."/>
            <person name="Meyers C."/>
            <person name="Nakajima M."/>
            <person name="Narusaka M."/>
            <person name="Seki M."/>
            <person name="Sakurai T."/>
            <person name="Satou M."/>
            <person name="Tamse R."/>
            <person name="Vaysberg M."/>
            <person name="Wallender E.K."/>
            <person name="Wong C."/>
            <person name="Yamamura Y."/>
            <person name="Yuan S."/>
            <person name="Shinozaki K."/>
            <person name="Davis R.W."/>
            <person name="Theologis A."/>
            <person name="Ecker J.R."/>
        </authorList>
    </citation>
    <scope>NUCLEOTIDE SEQUENCE [LARGE SCALE MRNA]</scope>
    <source>
        <strain>cv. Columbia</strain>
    </source>
</reference>
<reference key="4">
    <citation type="submission" date="2002-03" db="EMBL/GenBank/DDBJ databases">
        <title>Full-length cDNA from Arabidopsis thaliana.</title>
        <authorList>
            <person name="Brover V.V."/>
            <person name="Troukhan M.E."/>
            <person name="Alexandrov N.A."/>
            <person name="Lu Y.-P."/>
            <person name="Flavell R.B."/>
            <person name="Feldmann K.A."/>
        </authorList>
    </citation>
    <scope>NUCLEOTIDE SEQUENCE [LARGE SCALE MRNA]</scope>
</reference>
<reference key="5">
    <citation type="journal article" date="2012" name="Mol. Cell. Proteomics">
        <title>Comparative large-scale characterisation of plant vs. mammal proteins reveals similar and idiosyncratic N-alpha acetylation features.</title>
        <authorList>
            <person name="Bienvenut W.V."/>
            <person name="Sumpton D."/>
            <person name="Martinez A."/>
            <person name="Lilla S."/>
            <person name="Espagne C."/>
            <person name="Meinnel T."/>
            <person name="Giglione C."/>
        </authorList>
    </citation>
    <scope>CLEAVAGE OF TRANSIT PEPTIDE [LARGE SCALE ANALYSIS] AFTER ALA-49</scope>
    <scope>IDENTIFICATION BY MASS SPECTROMETRY [LARGE SCALE ANALYSIS]</scope>
</reference>
<protein>
    <recommendedName>
        <fullName>Uncharacterized protein At5g50100, chloroplastic</fullName>
    </recommendedName>
</protein>
<gene>
    <name type="ordered locus">At5g50100</name>
    <name type="ORF">MPF21.11</name>
</gene>
<evidence type="ECO:0000305" key="1"/>
<evidence type="ECO:0007744" key="2">
    <source>
    </source>
</evidence>
<comment type="subcellular location">
    <subcellularLocation>
        <location evidence="1">Plastid</location>
        <location evidence="1">Chloroplast</location>
    </subcellularLocation>
</comment>
<comment type="sequence caution" evidence="1">
    <conflict type="erroneous gene model prediction">
        <sequence resource="EMBL-CDS" id="BAB10296"/>
    </conflict>
</comment>
<keyword id="KW-0150">Chloroplast</keyword>
<keyword id="KW-0934">Plastid</keyword>
<keyword id="KW-1185">Reference proteome</keyword>
<keyword id="KW-0809">Transit peptide</keyword>